<comment type="function">
    <text evidence="1">Catalyzes the N-acylation of UDP-3-O-acylglucosamine using 3-hydroxyacyl-ACP as the acyl donor. Is involved in the biosynthesis of lipid A, a phosphorylated glycolipid that anchors the lipopolysaccharide to the outer membrane of the cell.</text>
</comment>
<comment type="catalytic activity">
    <reaction evidence="1">
        <text>a UDP-3-O-[(3R)-3-hydroxyacyl]-alpha-D-glucosamine + a (3R)-hydroxyacyl-[ACP] = a UDP-2-N,3-O-bis[(3R)-3-hydroxyacyl]-alpha-D-glucosamine + holo-[ACP] + H(+)</text>
        <dbReference type="Rhea" id="RHEA:53836"/>
        <dbReference type="Rhea" id="RHEA-COMP:9685"/>
        <dbReference type="Rhea" id="RHEA-COMP:9945"/>
        <dbReference type="ChEBI" id="CHEBI:15378"/>
        <dbReference type="ChEBI" id="CHEBI:64479"/>
        <dbReference type="ChEBI" id="CHEBI:78827"/>
        <dbReference type="ChEBI" id="CHEBI:137740"/>
        <dbReference type="ChEBI" id="CHEBI:137748"/>
        <dbReference type="EC" id="2.3.1.191"/>
    </reaction>
</comment>
<comment type="pathway">
    <text evidence="1">Bacterial outer membrane biogenesis; LPS lipid A biosynthesis.</text>
</comment>
<comment type="subunit">
    <text evidence="1">Homotrimer.</text>
</comment>
<comment type="similarity">
    <text evidence="1">Belongs to the transferase hexapeptide repeat family. LpxD subfamily.</text>
</comment>
<feature type="chain" id="PRO_1000127661" description="UDP-3-O-acylglucosamine N-acyltransferase">
    <location>
        <begin position="1"/>
        <end position="364"/>
    </location>
</feature>
<feature type="active site" description="Proton acceptor" evidence="1">
    <location>
        <position position="267"/>
    </location>
</feature>
<organism>
    <name type="scientific">Bordetella petrii (strain ATCC BAA-461 / DSM 12804 / CCUG 43448)</name>
    <dbReference type="NCBI Taxonomy" id="340100"/>
    <lineage>
        <taxon>Bacteria</taxon>
        <taxon>Pseudomonadati</taxon>
        <taxon>Pseudomonadota</taxon>
        <taxon>Betaproteobacteria</taxon>
        <taxon>Burkholderiales</taxon>
        <taxon>Alcaligenaceae</taxon>
        <taxon>Bordetella</taxon>
    </lineage>
</organism>
<protein>
    <recommendedName>
        <fullName evidence="1">UDP-3-O-acylglucosamine N-acyltransferase</fullName>
        <ecNumber evidence="1">2.3.1.191</ecNumber>
    </recommendedName>
</protein>
<reference key="1">
    <citation type="journal article" date="2008" name="BMC Genomics">
        <title>The missing link: Bordetella petrii is endowed with both the metabolic versatility of environmental bacteria and virulence traits of pathogenic Bordetellae.</title>
        <authorList>
            <person name="Gross R."/>
            <person name="Guzman C.A."/>
            <person name="Sebaihia M."/>
            <person name="Martin dos Santos V.A.P."/>
            <person name="Pieper D.H."/>
            <person name="Koebnik R."/>
            <person name="Lechner M."/>
            <person name="Bartels D."/>
            <person name="Buhrmester J."/>
            <person name="Choudhuri J.V."/>
            <person name="Ebensen T."/>
            <person name="Gaigalat L."/>
            <person name="Herrmann S."/>
            <person name="Khachane A.N."/>
            <person name="Larisch C."/>
            <person name="Link S."/>
            <person name="Linke B."/>
            <person name="Meyer F."/>
            <person name="Mormann S."/>
            <person name="Nakunst D."/>
            <person name="Rueckert C."/>
            <person name="Schneiker-Bekel S."/>
            <person name="Schulze K."/>
            <person name="Voerholter F.-J."/>
            <person name="Yevsa T."/>
            <person name="Engle J.T."/>
            <person name="Goldman W.E."/>
            <person name="Puehler A."/>
            <person name="Goebel U.B."/>
            <person name="Goesmann A."/>
            <person name="Bloecker H."/>
            <person name="Kaiser O."/>
            <person name="Martinez-Arias R."/>
        </authorList>
    </citation>
    <scope>NUCLEOTIDE SEQUENCE [LARGE SCALE GENOMIC DNA]</scope>
    <source>
        <strain>ATCC BAA-461 / DSM 12804 / CCUG 43448</strain>
    </source>
</reference>
<dbReference type="EC" id="2.3.1.191" evidence="1"/>
<dbReference type="EMBL" id="AM902716">
    <property type="protein sequence ID" value="CAP42867.1"/>
    <property type="molecule type" value="Genomic_DNA"/>
</dbReference>
<dbReference type="SMR" id="A9INS9"/>
<dbReference type="STRING" id="94624.Bpet2525"/>
<dbReference type="KEGG" id="bpt:Bpet2525"/>
<dbReference type="eggNOG" id="COG1044">
    <property type="taxonomic scope" value="Bacteria"/>
</dbReference>
<dbReference type="UniPathway" id="UPA00973"/>
<dbReference type="Proteomes" id="UP000001225">
    <property type="component" value="Chromosome"/>
</dbReference>
<dbReference type="GO" id="GO:0016020">
    <property type="term" value="C:membrane"/>
    <property type="evidence" value="ECO:0007669"/>
    <property type="project" value="GOC"/>
</dbReference>
<dbReference type="GO" id="GO:0016410">
    <property type="term" value="F:N-acyltransferase activity"/>
    <property type="evidence" value="ECO:0007669"/>
    <property type="project" value="InterPro"/>
</dbReference>
<dbReference type="GO" id="GO:0009245">
    <property type="term" value="P:lipid A biosynthetic process"/>
    <property type="evidence" value="ECO:0007669"/>
    <property type="project" value="UniProtKB-UniRule"/>
</dbReference>
<dbReference type="CDD" id="cd03352">
    <property type="entry name" value="LbH_LpxD"/>
    <property type="match status" value="1"/>
</dbReference>
<dbReference type="Gene3D" id="2.160.10.10">
    <property type="entry name" value="Hexapeptide repeat proteins"/>
    <property type="match status" value="1"/>
</dbReference>
<dbReference type="Gene3D" id="3.40.1390.10">
    <property type="entry name" value="MurE/MurF, N-terminal domain"/>
    <property type="match status" value="1"/>
</dbReference>
<dbReference type="HAMAP" id="MF_00523">
    <property type="entry name" value="LpxD"/>
    <property type="match status" value="1"/>
</dbReference>
<dbReference type="InterPro" id="IPR001451">
    <property type="entry name" value="Hexapep"/>
</dbReference>
<dbReference type="InterPro" id="IPR007691">
    <property type="entry name" value="LpxD"/>
</dbReference>
<dbReference type="InterPro" id="IPR011004">
    <property type="entry name" value="Trimer_LpxA-like_sf"/>
</dbReference>
<dbReference type="InterPro" id="IPR020573">
    <property type="entry name" value="UDP_GlcNAc_AcTrfase_non-rep"/>
</dbReference>
<dbReference type="NCBIfam" id="TIGR01853">
    <property type="entry name" value="lipid_A_lpxD"/>
    <property type="match status" value="1"/>
</dbReference>
<dbReference type="NCBIfam" id="NF002060">
    <property type="entry name" value="PRK00892.1"/>
    <property type="match status" value="1"/>
</dbReference>
<dbReference type="PANTHER" id="PTHR43378">
    <property type="entry name" value="UDP-3-O-ACYLGLUCOSAMINE N-ACYLTRANSFERASE"/>
    <property type="match status" value="1"/>
</dbReference>
<dbReference type="PANTHER" id="PTHR43378:SF2">
    <property type="entry name" value="UDP-3-O-ACYLGLUCOSAMINE N-ACYLTRANSFERASE 1, MITOCHONDRIAL-RELATED"/>
    <property type="match status" value="1"/>
</dbReference>
<dbReference type="Pfam" id="PF00132">
    <property type="entry name" value="Hexapep"/>
    <property type="match status" value="2"/>
</dbReference>
<dbReference type="Pfam" id="PF14602">
    <property type="entry name" value="Hexapep_2"/>
    <property type="match status" value="2"/>
</dbReference>
<dbReference type="Pfam" id="PF04613">
    <property type="entry name" value="LpxD"/>
    <property type="match status" value="1"/>
</dbReference>
<dbReference type="SUPFAM" id="SSF51161">
    <property type="entry name" value="Trimeric LpxA-like enzymes"/>
    <property type="match status" value="1"/>
</dbReference>
<proteinExistence type="inferred from homology"/>
<keyword id="KW-0012">Acyltransferase</keyword>
<keyword id="KW-0441">Lipid A biosynthesis</keyword>
<keyword id="KW-0444">Lipid biosynthesis</keyword>
<keyword id="KW-0443">Lipid metabolism</keyword>
<keyword id="KW-0677">Repeat</keyword>
<keyword id="KW-0808">Transferase</keyword>
<name>LPXD_BORPD</name>
<sequence>MPILLDPVRAPALDALLASANTQGLDWRIEAAADATLPRIRGIGTLASAGPEEISFLTNPRYQSQLAGTRAAAVIVTPDAAQALANDPSAPACARVVCPHPYLLYARLAQWFDAARRPRLPASVHPLAVVAPDAVIEDDVRIGPHCVVEAGASIGRGSTLGPGCVIGEGSSLGPDCLLHARVTLYANVRIGARAILHSGVVLGADGFGFAPDPTLGQGAWGKIAQLGGVRIGDDVEIGANTTIDRGALEDTDIGDGVKLDNQIMLGHNVRVGAHTAMAACVGVAGSTVIGSRCTIGGAAMLSGHLTLGDDVHISGGTAVTSNILQPGRYTGVYPYAEHGEWQRNAAVLQQLSQLRRRLRALEKA</sequence>
<accession>A9INS9</accession>
<gene>
    <name evidence="1" type="primary">lpxD</name>
    <name type="ordered locus">Bpet2525</name>
</gene>
<evidence type="ECO:0000255" key="1">
    <source>
        <dbReference type="HAMAP-Rule" id="MF_00523"/>
    </source>
</evidence>